<name>WECF_ECO8A</name>
<proteinExistence type="inferred from homology"/>
<protein>
    <recommendedName>
        <fullName evidence="1">TDP-N-acetylfucosamine:lipid II N-acetylfucosaminyltransferase</fullName>
        <ecNumber evidence="1">2.4.1.325</ecNumber>
    </recommendedName>
    <alternativeName>
        <fullName evidence="1">4-alpha-L-fucosyltransferase</fullName>
    </alternativeName>
    <alternativeName>
        <fullName evidence="1">TDP-Fuc4NAc:lipid II Fuc4NAc transferase</fullName>
        <shortName evidence="1">Fuc4NAc transferase</shortName>
    </alternativeName>
</protein>
<reference key="1">
    <citation type="journal article" date="2009" name="PLoS Genet.">
        <title>Organised genome dynamics in the Escherichia coli species results in highly diverse adaptive paths.</title>
        <authorList>
            <person name="Touchon M."/>
            <person name="Hoede C."/>
            <person name="Tenaillon O."/>
            <person name="Barbe V."/>
            <person name="Baeriswyl S."/>
            <person name="Bidet P."/>
            <person name="Bingen E."/>
            <person name="Bonacorsi S."/>
            <person name="Bouchier C."/>
            <person name="Bouvet O."/>
            <person name="Calteau A."/>
            <person name="Chiapello H."/>
            <person name="Clermont O."/>
            <person name="Cruveiller S."/>
            <person name="Danchin A."/>
            <person name="Diard M."/>
            <person name="Dossat C."/>
            <person name="Karoui M.E."/>
            <person name="Frapy E."/>
            <person name="Garry L."/>
            <person name="Ghigo J.M."/>
            <person name="Gilles A.M."/>
            <person name="Johnson J."/>
            <person name="Le Bouguenec C."/>
            <person name="Lescat M."/>
            <person name="Mangenot S."/>
            <person name="Martinez-Jehanne V."/>
            <person name="Matic I."/>
            <person name="Nassif X."/>
            <person name="Oztas S."/>
            <person name="Petit M.A."/>
            <person name="Pichon C."/>
            <person name="Rouy Z."/>
            <person name="Ruf C.S."/>
            <person name="Schneider D."/>
            <person name="Tourret J."/>
            <person name="Vacherie B."/>
            <person name="Vallenet D."/>
            <person name="Medigue C."/>
            <person name="Rocha E.P.C."/>
            <person name="Denamur E."/>
        </authorList>
    </citation>
    <scope>NUCLEOTIDE SEQUENCE [LARGE SCALE GENOMIC DNA]</scope>
    <source>
        <strain>IAI1</strain>
    </source>
</reference>
<accession>B7M5E0</accession>
<comment type="function">
    <text evidence="1">Catalyzes the synthesis of Und-PP-GlcNAc-ManNAcA-Fuc4NAc (Lipid III), the third lipid-linked intermediate involved in ECA synthesis.</text>
</comment>
<comment type="catalytic activity">
    <reaction evidence="1">
        <text>beta-D-ManNAcA-(1-&gt;4)-alpha-D-GlcNAc-di-trans,octa-cis-undecaprenyl diphosphate + dTDP-4-acetamido-4,6-dideoxy-alpha-D-galactose = alpha-D-FucNAc4-(1-&gt;4)-beta-D-ManNAcA-(1-&gt;4)-D-GlcNAc-undecaprenyl diphosphate + dTDP + H(+)</text>
        <dbReference type="Rhea" id="RHEA:28759"/>
        <dbReference type="ChEBI" id="CHEBI:15378"/>
        <dbReference type="ChEBI" id="CHEBI:58369"/>
        <dbReference type="ChEBI" id="CHEBI:61495"/>
        <dbReference type="ChEBI" id="CHEBI:61496"/>
        <dbReference type="ChEBI" id="CHEBI:68493"/>
        <dbReference type="EC" id="2.4.1.325"/>
    </reaction>
</comment>
<comment type="pathway">
    <text evidence="1">Bacterial outer membrane biogenesis; enterobacterial common antigen biosynthesis.</text>
</comment>
<comment type="subcellular location">
    <subcellularLocation>
        <location evidence="1">Cell inner membrane</location>
        <topology evidence="1">Peripheral membrane protein</topology>
    </subcellularLocation>
</comment>
<comment type="similarity">
    <text evidence="1">Belongs to the glycosyltransferase 56 family.</text>
</comment>
<feature type="chain" id="PRO_1000134597" description="TDP-N-acetylfucosamine:lipid II N-acetylfucosaminyltransferase">
    <location>
        <begin position="1"/>
        <end position="359"/>
    </location>
</feature>
<gene>
    <name evidence="1" type="primary">wecF</name>
    <name evidence="1" type="synonym">rffT</name>
    <name type="ordered locus">ECIAI1_3980</name>
</gene>
<dbReference type="EC" id="2.4.1.325" evidence="1"/>
<dbReference type="EMBL" id="CU928160">
    <property type="protein sequence ID" value="CAR00765.1"/>
    <property type="molecule type" value="Genomic_DNA"/>
</dbReference>
<dbReference type="RefSeq" id="WP_000217237.1">
    <property type="nucleotide sequence ID" value="NC_011741.1"/>
</dbReference>
<dbReference type="CAZy" id="GT56">
    <property type="family name" value="Glycosyltransferase Family 56"/>
</dbReference>
<dbReference type="KEGG" id="ecr:ECIAI1_3980"/>
<dbReference type="HOGENOM" id="CLU_066584_0_0_6"/>
<dbReference type="UniPathway" id="UPA00566"/>
<dbReference type="GO" id="GO:0005886">
    <property type="term" value="C:plasma membrane"/>
    <property type="evidence" value="ECO:0007669"/>
    <property type="project" value="UniProtKB-SubCell"/>
</dbReference>
<dbReference type="GO" id="GO:0102031">
    <property type="term" value="F:4-acetamido-4,6-dideoxy-D-galactose transferase activity"/>
    <property type="evidence" value="ECO:0007669"/>
    <property type="project" value="UniProtKB-EC"/>
</dbReference>
<dbReference type="GO" id="GO:0008417">
    <property type="term" value="F:fucosyltransferase activity"/>
    <property type="evidence" value="ECO:0007669"/>
    <property type="project" value="InterPro"/>
</dbReference>
<dbReference type="GO" id="GO:0009246">
    <property type="term" value="P:enterobacterial common antigen biosynthetic process"/>
    <property type="evidence" value="ECO:0007669"/>
    <property type="project" value="UniProtKB-UniRule"/>
</dbReference>
<dbReference type="GO" id="GO:0036065">
    <property type="term" value="P:fucosylation"/>
    <property type="evidence" value="ECO:0007669"/>
    <property type="project" value="InterPro"/>
</dbReference>
<dbReference type="HAMAP" id="MF_01002">
    <property type="entry name" value="WecF_RffT"/>
    <property type="match status" value="1"/>
</dbReference>
<dbReference type="InterPro" id="IPR009993">
    <property type="entry name" value="WecF"/>
</dbReference>
<dbReference type="NCBIfam" id="NF002752">
    <property type="entry name" value="PRK02797.1-1"/>
    <property type="match status" value="1"/>
</dbReference>
<dbReference type="NCBIfam" id="NF002753">
    <property type="entry name" value="PRK02797.1-2"/>
    <property type="match status" value="1"/>
</dbReference>
<dbReference type="NCBIfam" id="NF002754">
    <property type="entry name" value="PRK02797.1-3"/>
    <property type="match status" value="1"/>
</dbReference>
<dbReference type="Pfam" id="PF07429">
    <property type="entry name" value="Glyco_transf_56"/>
    <property type="match status" value="1"/>
</dbReference>
<organism>
    <name type="scientific">Escherichia coli O8 (strain IAI1)</name>
    <dbReference type="NCBI Taxonomy" id="585034"/>
    <lineage>
        <taxon>Bacteria</taxon>
        <taxon>Pseudomonadati</taxon>
        <taxon>Pseudomonadota</taxon>
        <taxon>Gammaproteobacteria</taxon>
        <taxon>Enterobacterales</taxon>
        <taxon>Enterobacteriaceae</taxon>
        <taxon>Escherichia</taxon>
    </lineage>
</organism>
<evidence type="ECO:0000255" key="1">
    <source>
        <dbReference type="HAMAP-Rule" id="MF_01002"/>
    </source>
</evidence>
<sequence length="359" mass="40457">MTVLIHVLGSDIPHHNRTVLRFFNDALAATSEHAREFMVVGKDDGLSDSCPALSVQFFPGKKSLAEAVIAKAKANRQQRFFFHGQFNPTLWLALLSGGIKPSQFFWHIWGADLYELSSGLRYKLFYPLRRLAQKRVGCVFATRGDLSFFAKTHPKVRGELLYFPTRMDPSLNTMANDRQREGKMTILVGNSGDLSNEHVAALRAVHQQFGDTVKVVVPMGYPPNNEAYIEEVRQAGLELFSEENLQILSEKLEFDAYLALLRQCDLGYFIFARQQGIGTLCLLIQAGIPCVLNRENPFWQDMTEQHLPVLFTTDDLNEDIVREAQRQLASVDKNTIAFFSPNYLQGWQRALAIAAGEGA</sequence>
<keyword id="KW-0997">Cell inner membrane</keyword>
<keyword id="KW-1003">Cell membrane</keyword>
<keyword id="KW-0328">Glycosyltransferase</keyword>
<keyword id="KW-0472">Membrane</keyword>
<keyword id="KW-0808">Transferase</keyword>